<accession>Q12912</accession>
<accession>A0AVM2</accession>
<accession>B4E077</accession>
<accession>Q8N301</accession>
<organism>
    <name type="scientific">Homo sapiens</name>
    <name type="common">Human</name>
    <dbReference type="NCBI Taxonomy" id="9606"/>
    <lineage>
        <taxon>Eukaryota</taxon>
        <taxon>Metazoa</taxon>
        <taxon>Chordata</taxon>
        <taxon>Craniata</taxon>
        <taxon>Vertebrata</taxon>
        <taxon>Euteleostomi</taxon>
        <taxon>Mammalia</taxon>
        <taxon>Eutheria</taxon>
        <taxon>Euarchontoglires</taxon>
        <taxon>Primates</taxon>
        <taxon>Haplorrhini</taxon>
        <taxon>Catarrhini</taxon>
        <taxon>Hominidae</taxon>
        <taxon>Homo</taxon>
    </lineage>
</organism>
<keyword id="KW-0002">3D-structure</keyword>
<keyword id="KW-0025">Alternative splicing</keyword>
<keyword id="KW-0158">Chromosome</keyword>
<keyword id="KW-0175">Coiled coil</keyword>
<keyword id="KW-0963">Cytoplasm</keyword>
<keyword id="KW-0206">Cytoskeleton</keyword>
<keyword id="KW-0903">Direct protein sequencing</keyword>
<keyword id="KW-0256">Endoplasmic reticulum</keyword>
<keyword id="KW-0278">Fertilization</keyword>
<keyword id="KW-0391">Immunity</keyword>
<keyword id="KW-0472">Membrane</keyword>
<keyword id="KW-0539">Nucleus</keyword>
<keyword id="KW-0597">Phosphoprotein</keyword>
<keyword id="KW-1267">Proteomics identification</keyword>
<keyword id="KW-1185">Reference proteome</keyword>
<keyword id="KW-0812">Transmembrane</keyword>
<keyword id="KW-1133">Transmembrane helix</keyword>
<protein>
    <recommendedName>
        <fullName evidence="11">Inositol 1,4,5-triphosphate receptor associated 2</fullName>
    </recommendedName>
    <alternativeName>
        <fullName>Lymphoid-restricted membrane protein</fullName>
    </alternativeName>
    <alternativeName>
        <fullName>Protein Jaw1</fullName>
    </alternativeName>
    <component>
        <recommendedName>
            <fullName>Processed inositol 1,4,5-triphosphate receptor associated 2</fullName>
        </recommendedName>
    </component>
</protein>
<reference key="1">
    <citation type="journal article" date="1994" name="J. Immunol.">
        <title>Jaw1, a lymphoid-restricted membrane protein localized to the endoplasmic reticulum.</title>
        <authorList>
            <person name="Behrens T.W."/>
            <person name="Jagadeesh J."/>
            <person name="Scherle P."/>
            <person name="Kearns G."/>
            <person name="Yewdell J."/>
            <person name="Staudt L.M."/>
        </authorList>
    </citation>
    <scope>NUCLEOTIDE SEQUENCE [MRNA] (ISOFORM 1)</scope>
    <scope>SUBCELLULAR LOCATION</scope>
    <scope>TISSUE SPECIFICITY</scope>
    <scope>VARIANTS VAL-197; TRP-241 AND SER-253</scope>
</reference>
<reference key="2">
    <citation type="journal article" date="2004" name="Nat. Genet.">
        <title>Complete sequencing and characterization of 21,243 full-length human cDNAs.</title>
        <authorList>
            <person name="Ota T."/>
            <person name="Suzuki Y."/>
            <person name="Nishikawa T."/>
            <person name="Otsuki T."/>
            <person name="Sugiyama T."/>
            <person name="Irie R."/>
            <person name="Wakamatsu A."/>
            <person name="Hayashi K."/>
            <person name="Sato H."/>
            <person name="Nagai K."/>
            <person name="Kimura K."/>
            <person name="Makita H."/>
            <person name="Sekine M."/>
            <person name="Obayashi M."/>
            <person name="Nishi T."/>
            <person name="Shibahara T."/>
            <person name="Tanaka T."/>
            <person name="Ishii S."/>
            <person name="Yamamoto J."/>
            <person name="Saito K."/>
            <person name="Kawai Y."/>
            <person name="Isono Y."/>
            <person name="Nakamura Y."/>
            <person name="Nagahari K."/>
            <person name="Murakami K."/>
            <person name="Yasuda T."/>
            <person name="Iwayanagi T."/>
            <person name="Wagatsuma M."/>
            <person name="Shiratori A."/>
            <person name="Sudo H."/>
            <person name="Hosoiri T."/>
            <person name="Kaku Y."/>
            <person name="Kodaira H."/>
            <person name="Kondo H."/>
            <person name="Sugawara M."/>
            <person name="Takahashi M."/>
            <person name="Kanda K."/>
            <person name="Yokoi T."/>
            <person name="Furuya T."/>
            <person name="Kikkawa E."/>
            <person name="Omura Y."/>
            <person name="Abe K."/>
            <person name="Kamihara K."/>
            <person name="Katsuta N."/>
            <person name="Sato K."/>
            <person name="Tanikawa M."/>
            <person name="Yamazaki M."/>
            <person name="Ninomiya K."/>
            <person name="Ishibashi T."/>
            <person name="Yamashita H."/>
            <person name="Murakawa K."/>
            <person name="Fujimori K."/>
            <person name="Tanai H."/>
            <person name="Kimata M."/>
            <person name="Watanabe M."/>
            <person name="Hiraoka S."/>
            <person name="Chiba Y."/>
            <person name="Ishida S."/>
            <person name="Ono Y."/>
            <person name="Takiguchi S."/>
            <person name="Watanabe S."/>
            <person name="Yosida M."/>
            <person name="Hotuta T."/>
            <person name="Kusano J."/>
            <person name="Kanehori K."/>
            <person name="Takahashi-Fujii A."/>
            <person name="Hara H."/>
            <person name="Tanase T.-O."/>
            <person name="Nomura Y."/>
            <person name="Togiya S."/>
            <person name="Komai F."/>
            <person name="Hara R."/>
            <person name="Takeuchi K."/>
            <person name="Arita M."/>
            <person name="Imose N."/>
            <person name="Musashino K."/>
            <person name="Yuuki H."/>
            <person name="Oshima A."/>
            <person name="Sasaki N."/>
            <person name="Aotsuka S."/>
            <person name="Yoshikawa Y."/>
            <person name="Matsunawa H."/>
            <person name="Ichihara T."/>
            <person name="Shiohata N."/>
            <person name="Sano S."/>
            <person name="Moriya S."/>
            <person name="Momiyama H."/>
            <person name="Satoh N."/>
            <person name="Takami S."/>
            <person name="Terashima Y."/>
            <person name="Suzuki O."/>
            <person name="Nakagawa S."/>
            <person name="Senoh A."/>
            <person name="Mizoguchi H."/>
            <person name="Goto Y."/>
            <person name="Shimizu F."/>
            <person name="Wakebe H."/>
            <person name="Hishigaki H."/>
            <person name="Watanabe T."/>
            <person name="Sugiyama A."/>
            <person name="Takemoto M."/>
            <person name="Kawakami B."/>
            <person name="Yamazaki M."/>
            <person name="Watanabe K."/>
            <person name="Kumagai A."/>
            <person name="Itakura S."/>
            <person name="Fukuzumi Y."/>
            <person name="Fujimori Y."/>
            <person name="Komiyama M."/>
            <person name="Tashiro H."/>
            <person name="Tanigami A."/>
            <person name="Fujiwara T."/>
            <person name="Ono T."/>
            <person name="Yamada K."/>
            <person name="Fujii Y."/>
            <person name="Ozaki K."/>
            <person name="Hirao M."/>
            <person name="Ohmori Y."/>
            <person name="Kawabata A."/>
            <person name="Hikiji T."/>
            <person name="Kobatake N."/>
            <person name="Inagaki H."/>
            <person name="Ikema Y."/>
            <person name="Okamoto S."/>
            <person name="Okitani R."/>
            <person name="Kawakami T."/>
            <person name="Noguchi S."/>
            <person name="Itoh T."/>
            <person name="Shigeta K."/>
            <person name="Senba T."/>
            <person name="Matsumura K."/>
            <person name="Nakajima Y."/>
            <person name="Mizuno T."/>
            <person name="Morinaga M."/>
            <person name="Sasaki M."/>
            <person name="Togashi T."/>
            <person name="Oyama M."/>
            <person name="Hata H."/>
            <person name="Watanabe M."/>
            <person name="Komatsu T."/>
            <person name="Mizushima-Sugano J."/>
            <person name="Satoh T."/>
            <person name="Shirai Y."/>
            <person name="Takahashi Y."/>
            <person name="Nakagawa K."/>
            <person name="Okumura K."/>
            <person name="Nagase T."/>
            <person name="Nomura N."/>
            <person name="Kikuchi H."/>
            <person name="Masuho Y."/>
            <person name="Yamashita R."/>
            <person name="Nakai K."/>
            <person name="Yada T."/>
            <person name="Nakamura Y."/>
            <person name="Ohara O."/>
            <person name="Isogai T."/>
            <person name="Sugano S."/>
        </authorList>
    </citation>
    <scope>NUCLEOTIDE SEQUENCE [LARGE SCALE MRNA] (ISOFORM 2)</scope>
    <scope>VARIANT VAL-197</scope>
    <source>
        <tissue>Thymus</tissue>
    </source>
</reference>
<reference key="3">
    <citation type="journal article" date="2006" name="Nature">
        <title>The finished DNA sequence of human chromosome 12.</title>
        <authorList>
            <person name="Scherer S.E."/>
            <person name="Muzny D.M."/>
            <person name="Buhay C.J."/>
            <person name="Chen R."/>
            <person name="Cree A."/>
            <person name="Ding Y."/>
            <person name="Dugan-Rocha S."/>
            <person name="Gill R."/>
            <person name="Gunaratne P."/>
            <person name="Harris R.A."/>
            <person name="Hawes A.C."/>
            <person name="Hernandez J."/>
            <person name="Hodgson A.V."/>
            <person name="Hume J."/>
            <person name="Jackson A."/>
            <person name="Khan Z.M."/>
            <person name="Kovar-Smith C."/>
            <person name="Lewis L.R."/>
            <person name="Lozado R.J."/>
            <person name="Metzker M.L."/>
            <person name="Milosavljevic A."/>
            <person name="Miner G.R."/>
            <person name="Montgomery K.T."/>
            <person name="Morgan M.B."/>
            <person name="Nazareth L.V."/>
            <person name="Scott G."/>
            <person name="Sodergren E."/>
            <person name="Song X.-Z."/>
            <person name="Steffen D."/>
            <person name="Lovering R.C."/>
            <person name="Wheeler D.A."/>
            <person name="Worley K.C."/>
            <person name="Yuan Y."/>
            <person name="Zhang Z."/>
            <person name="Adams C.Q."/>
            <person name="Ansari-Lari M.A."/>
            <person name="Ayele M."/>
            <person name="Brown M.J."/>
            <person name="Chen G."/>
            <person name="Chen Z."/>
            <person name="Clerc-Blankenburg K.P."/>
            <person name="Davis C."/>
            <person name="Delgado O."/>
            <person name="Dinh H.H."/>
            <person name="Draper H."/>
            <person name="Gonzalez-Garay M.L."/>
            <person name="Havlak P."/>
            <person name="Jackson L.R."/>
            <person name="Jacob L.S."/>
            <person name="Kelly S.H."/>
            <person name="Li L."/>
            <person name="Li Z."/>
            <person name="Liu J."/>
            <person name="Liu W."/>
            <person name="Lu J."/>
            <person name="Maheshwari M."/>
            <person name="Nguyen B.-V."/>
            <person name="Okwuonu G.O."/>
            <person name="Pasternak S."/>
            <person name="Perez L.M."/>
            <person name="Plopper F.J.H."/>
            <person name="Santibanez J."/>
            <person name="Shen H."/>
            <person name="Tabor P.E."/>
            <person name="Verduzco D."/>
            <person name="Waldron L."/>
            <person name="Wang Q."/>
            <person name="Williams G.A."/>
            <person name="Zhang J."/>
            <person name="Zhou J."/>
            <person name="Allen C.C."/>
            <person name="Amin A.G."/>
            <person name="Anyalebechi V."/>
            <person name="Bailey M."/>
            <person name="Barbaria J.A."/>
            <person name="Bimage K.E."/>
            <person name="Bryant N.P."/>
            <person name="Burch P.E."/>
            <person name="Burkett C.E."/>
            <person name="Burrell K.L."/>
            <person name="Calderon E."/>
            <person name="Cardenas V."/>
            <person name="Carter K."/>
            <person name="Casias K."/>
            <person name="Cavazos I."/>
            <person name="Cavazos S.R."/>
            <person name="Ceasar H."/>
            <person name="Chacko J."/>
            <person name="Chan S.N."/>
            <person name="Chavez D."/>
            <person name="Christopoulos C."/>
            <person name="Chu J."/>
            <person name="Cockrell R."/>
            <person name="Cox C.D."/>
            <person name="Dang M."/>
            <person name="Dathorne S.R."/>
            <person name="David R."/>
            <person name="Davis C.M."/>
            <person name="Davy-Carroll L."/>
            <person name="Deshazo D.R."/>
            <person name="Donlin J.E."/>
            <person name="D'Souza L."/>
            <person name="Eaves K.A."/>
            <person name="Egan A."/>
            <person name="Emery-Cohen A.J."/>
            <person name="Escotto M."/>
            <person name="Flagg N."/>
            <person name="Forbes L.D."/>
            <person name="Gabisi A.M."/>
            <person name="Garza M."/>
            <person name="Hamilton C."/>
            <person name="Henderson N."/>
            <person name="Hernandez O."/>
            <person name="Hines S."/>
            <person name="Hogues M.E."/>
            <person name="Huang M."/>
            <person name="Idlebird D.G."/>
            <person name="Johnson R."/>
            <person name="Jolivet A."/>
            <person name="Jones S."/>
            <person name="Kagan R."/>
            <person name="King L.M."/>
            <person name="Leal B."/>
            <person name="Lebow H."/>
            <person name="Lee S."/>
            <person name="LeVan J.M."/>
            <person name="Lewis L.C."/>
            <person name="London P."/>
            <person name="Lorensuhewa L.M."/>
            <person name="Loulseged H."/>
            <person name="Lovett D.A."/>
            <person name="Lucier A."/>
            <person name="Lucier R.L."/>
            <person name="Ma J."/>
            <person name="Madu R.C."/>
            <person name="Mapua P."/>
            <person name="Martindale A.D."/>
            <person name="Martinez E."/>
            <person name="Massey E."/>
            <person name="Mawhiney S."/>
            <person name="Meador M.G."/>
            <person name="Mendez S."/>
            <person name="Mercado C."/>
            <person name="Mercado I.C."/>
            <person name="Merritt C.E."/>
            <person name="Miner Z.L."/>
            <person name="Minja E."/>
            <person name="Mitchell T."/>
            <person name="Mohabbat F."/>
            <person name="Mohabbat K."/>
            <person name="Montgomery B."/>
            <person name="Moore N."/>
            <person name="Morris S."/>
            <person name="Munidasa M."/>
            <person name="Ngo R.N."/>
            <person name="Nguyen N.B."/>
            <person name="Nickerson E."/>
            <person name="Nwaokelemeh O.O."/>
            <person name="Nwokenkwo S."/>
            <person name="Obregon M."/>
            <person name="Oguh M."/>
            <person name="Oragunye N."/>
            <person name="Oviedo R.J."/>
            <person name="Parish B.J."/>
            <person name="Parker D.N."/>
            <person name="Parrish J."/>
            <person name="Parks K.L."/>
            <person name="Paul H.A."/>
            <person name="Payton B.A."/>
            <person name="Perez A."/>
            <person name="Perrin W."/>
            <person name="Pickens A."/>
            <person name="Primus E.L."/>
            <person name="Pu L.-L."/>
            <person name="Puazo M."/>
            <person name="Quiles M.M."/>
            <person name="Quiroz J.B."/>
            <person name="Rabata D."/>
            <person name="Reeves K."/>
            <person name="Ruiz S.J."/>
            <person name="Shao H."/>
            <person name="Sisson I."/>
            <person name="Sonaike T."/>
            <person name="Sorelle R.P."/>
            <person name="Sutton A.E."/>
            <person name="Svatek A.F."/>
            <person name="Svetz L.A."/>
            <person name="Tamerisa K.S."/>
            <person name="Taylor T.R."/>
            <person name="Teague B."/>
            <person name="Thomas N."/>
            <person name="Thorn R.D."/>
            <person name="Trejos Z.Y."/>
            <person name="Trevino B.K."/>
            <person name="Ukegbu O.N."/>
            <person name="Urban J.B."/>
            <person name="Vasquez L.I."/>
            <person name="Vera V.A."/>
            <person name="Villasana D.M."/>
            <person name="Wang L."/>
            <person name="Ward-Moore S."/>
            <person name="Warren J.T."/>
            <person name="Wei X."/>
            <person name="White F."/>
            <person name="Williamson A.L."/>
            <person name="Wleczyk R."/>
            <person name="Wooden H.S."/>
            <person name="Wooden S.H."/>
            <person name="Yen J."/>
            <person name="Yoon L."/>
            <person name="Yoon V."/>
            <person name="Zorrilla S.E."/>
            <person name="Nelson D."/>
            <person name="Kucherlapati R."/>
            <person name="Weinstock G."/>
            <person name="Gibbs R.A."/>
        </authorList>
    </citation>
    <scope>NUCLEOTIDE SEQUENCE [LARGE SCALE GENOMIC DNA]</scope>
</reference>
<reference key="4">
    <citation type="journal article" date="2004" name="Genome Res.">
        <title>The status, quality, and expansion of the NIH full-length cDNA project: the Mammalian Gene Collection (MGC).</title>
        <authorList>
            <consortium name="The MGC Project Team"/>
        </authorList>
    </citation>
    <scope>NUCLEOTIDE SEQUENCE [LARGE SCALE MRNA] (ISOFORM 1)</scope>
    <scope>VARIANTS VAL-197 AND SER-253</scope>
    <source>
        <tissue>Brain</tissue>
        <tissue>Testis</tissue>
    </source>
</reference>
<reference key="5">
    <citation type="submission" date="2005-06" db="UniProtKB">
        <authorList>
            <person name="Bienvenut W.V."/>
        </authorList>
    </citation>
    <scope>PROTEIN SEQUENCE OF 165-193; 209-216; 223-230; 283-290; 295-306; 310-322; 345-358; 374-381; 422-435 AND 470-487</scope>
    <scope>IDENTIFICATION BY MASS SPECTROMETRY</scope>
    <source>
        <tissue>B-cell lymphoma</tissue>
    </source>
</reference>
<reference key="6">
    <citation type="journal article" date="2006" name="J. Pathol.">
        <title>Jaw1/LRMP, a germinal centre-associated marker for the immunohistological study of B-cell lymphomas.</title>
        <authorList>
            <person name="Tedoldi S."/>
            <person name="Paterson J.C."/>
            <person name="Cordell J."/>
            <person name="Tan S.Y."/>
            <person name="Jones M."/>
            <person name="Manek S."/>
            <person name="Dei Tos A.P."/>
            <person name="Roberton H."/>
            <person name="Masir N."/>
            <person name="Natkunam Y."/>
            <person name="Pileri S.A."/>
            <person name="Facchetti F."/>
            <person name="Hansmann M.L."/>
            <person name="Mason D.Y."/>
            <person name="Marafioti T."/>
        </authorList>
    </citation>
    <scope>SUBCELLULAR LOCATION</scope>
    <scope>TISSUE SPECIFICITY</scope>
</reference>
<reference key="7">
    <citation type="journal article" date="2011" name="BMC Syst. Biol.">
        <title>Initial characterization of the human central proteome.</title>
        <authorList>
            <person name="Burkard T.R."/>
            <person name="Planyavsky M."/>
            <person name="Kaupe I."/>
            <person name="Breitwieser F.P."/>
            <person name="Buerckstuemmer T."/>
            <person name="Bennett K.L."/>
            <person name="Superti-Furga G."/>
            <person name="Colinge J."/>
        </authorList>
    </citation>
    <scope>IDENTIFICATION BY MASS SPECTROMETRY [LARGE SCALE ANALYSIS]</scope>
</reference>
<reference key="8">
    <citation type="journal article" date="2013" name="J. Proteome Res.">
        <title>Toward a comprehensive characterization of a human cancer cell phosphoproteome.</title>
        <authorList>
            <person name="Zhou H."/>
            <person name="Di Palma S."/>
            <person name="Preisinger C."/>
            <person name="Peng M."/>
            <person name="Polat A.N."/>
            <person name="Heck A.J."/>
            <person name="Mohammed S."/>
        </authorList>
    </citation>
    <scope>PHOSPHORYLATION [LARGE SCALE ANALYSIS] AT SER-363 AND SER-370</scope>
    <scope>IDENTIFICATION BY MASS SPECTROMETRY [LARGE SCALE ANALYSIS]</scope>
    <source>
        <tissue>Erythroleukemia</tissue>
    </source>
</reference>
<reference key="9">
    <citation type="journal article" date="2014" name="J. Proteomics">
        <title>An enzyme assisted RP-RPLC approach for in-depth analysis of human liver phosphoproteome.</title>
        <authorList>
            <person name="Bian Y."/>
            <person name="Song C."/>
            <person name="Cheng K."/>
            <person name="Dong M."/>
            <person name="Wang F."/>
            <person name="Huang J."/>
            <person name="Sun D."/>
            <person name="Wang L."/>
            <person name="Ye M."/>
            <person name="Zou H."/>
        </authorList>
    </citation>
    <scope>PHOSPHORYLATION [LARGE SCALE ANALYSIS] AT THR-91</scope>
    <scope>IDENTIFICATION BY MASS SPECTROMETRY [LARGE SCALE ANALYSIS]</scope>
    <source>
        <tissue>Liver</tissue>
    </source>
</reference>
<gene>
    <name evidence="12" type="primary">IRAG2</name>
    <name type="synonym">JAW1</name>
    <name type="synonym">LRMP</name>
</gene>
<dbReference type="EMBL" id="U10485">
    <property type="protein sequence ID" value="AAA21604.1"/>
    <property type="molecule type" value="mRNA"/>
</dbReference>
<dbReference type="EMBL" id="AK303256">
    <property type="protein sequence ID" value="BAG64339.1"/>
    <property type="molecule type" value="mRNA"/>
</dbReference>
<dbReference type="EMBL" id="AC023510">
    <property type="status" value="NOT_ANNOTATED_CDS"/>
    <property type="molecule type" value="Genomic_DNA"/>
</dbReference>
<dbReference type="EMBL" id="BC029391">
    <property type="protein sequence ID" value="AAH29391.1"/>
    <property type="status" value="ALT_SEQ"/>
    <property type="molecule type" value="mRNA"/>
</dbReference>
<dbReference type="EMBL" id="BC126417">
    <property type="protein sequence ID" value="AAI26418.1"/>
    <property type="status" value="ALT_INIT"/>
    <property type="molecule type" value="mRNA"/>
</dbReference>
<dbReference type="CCDS" id="CCDS8701.1">
    <molecule id="Q12912-2"/>
</dbReference>
<dbReference type="PIR" id="I38656">
    <property type="entry name" value="I38656"/>
</dbReference>
<dbReference type="RefSeq" id="NP_001191055.1">
    <molecule id="Q12912-2"/>
    <property type="nucleotide sequence ID" value="NM_001204126.2"/>
</dbReference>
<dbReference type="RefSeq" id="NP_001191056.1">
    <molecule id="Q12912-2"/>
    <property type="nucleotide sequence ID" value="NM_001204127.2"/>
</dbReference>
<dbReference type="RefSeq" id="NP_001353469.1">
    <molecule id="Q12912-2"/>
    <property type="nucleotide sequence ID" value="NM_001366540.1"/>
</dbReference>
<dbReference type="RefSeq" id="NP_001353470.1">
    <molecule id="Q12912-2"/>
    <property type="nucleotide sequence ID" value="NM_001366541.2"/>
</dbReference>
<dbReference type="RefSeq" id="NP_001353471.1">
    <molecule id="Q12912-2"/>
    <property type="nucleotide sequence ID" value="NM_001366542.2"/>
</dbReference>
<dbReference type="RefSeq" id="NP_001353472.1">
    <molecule id="Q12912-2"/>
    <property type="nucleotide sequence ID" value="NM_001366543.2"/>
</dbReference>
<dbReference type="RefSeq" id="NP_001353473.1">
    <molecule id="Q12912-2"/>
    <property type="nucleotide sequence ID" value="NM_001366544.2"/>
</dbReference>
<dbReference type="RefSeq" id="NP_001353474.1">
    <molecule id="Q12912-2"/>
    <property type="nucleotide sequence ID" value="NM_001366545.2"/>
</dbReference>
<dbReference type="RefSeq" id="NP_001353475.1">
    <molecule id="Q12912-2"/>
    <property type="nucleotide sequence ID" value="NM_001366546.2"/>
</dbReference>
<dbReference type="RefSeq" id="NP_001353476.1">
    <molecule id="Q12912-2"/>
    <property type="nucleotide sequence ID" value="NM_001366547.2"/>
</dbReference>
<dbReference type="RefSeq" id="NP_006143.2">
    <molecule id="Q12912-2"/>
    <property type="nucleotide sequence ID" value="NM_006152.3"/>
</dbReference>
<dbReference type="RefSeq" id="XP_005253427.1">
    <property type="nucleotide sequence ID" value="XM_005253370.3"/>
</dbReference>
<dbReference type="RefSeq" id="XP_005253429.1">
    <property type="nucleotide sequence ID" value="XM_005253372.2"/>
</dbReference>
<dbReference type="RefSeq" id="XP_005253431.1">
    <property type="nucleotide sequence ID" value="XM_005253374.3"/>
</dbReference>
<dbReference type="RefSeq" id="XP_006719139.1">
    <property type="nucleotide sequence ID" value="XM_006719076.2"/>
</dbReference>
<dbReference type="RefSeq" id="XP_011518969.1">
    <property type="nucleotide sequence ID" value="XM_011520667.1"/>
</dbReference>
<dbReference type="RefSeq" id="XP_016874789.1">
    <property type="nucleotide sequence ID" value="XM_017019300.1"/>
</dbReference>
<dbReference type="RefSeq" id="XP_016874790.1">
    <property type="nucleotide sequence ID" value="XM_017019301.1"/>
</dbReference>
<dbReference type="RefSeq" id="XP_016874791.1">
    <property type="nucleotide sequence ID" value="XM_017019302.1"/>
</dbReference>
<dbReference type="RefSeq" id="XP_047284796.1">
    <molecule id="Q12912-2"/>
    <property type="nucleotide sequence ID" value="XM_047428840.1"/>
</dbReference>
<dbReference type="PDB" id="7Z8Y">
    <property type="method" value="X-ray"/>
    <property type="resolution" value="2.29 A"/>
    <property type="chains" value="D/E=531-555"/>
</dbReference>
<dbReference type="PDB" id="8B46">
    <property type="method" value="X-ray"/>
    <property type="resolution" value="1.67 A"/>
    <property type="chains" value="D/E/F=515-555"/>
</dbReference>
<dbReference type="PDB" id="8B5X">
    <property type="method" value="X-ray"/>
    <property type="resolution" value="1.98 A"/>
    <property type="chains" value="D/E=515-555"/>
</dbReference>
<dbReference type="PDBsum" id="7Z8Y"/>
<dbReference type="PDBsum" id="8B46"/>
<dbReference type="PDBsum" id="8B5X"/>
<dbReference type="SMR" id="Q12912"/>
<dbReference type="BioGRID" id="110213">
    <property type="interactions" value="11"/>
</dbReference>
<dbReference type="ComplexPortal" id="CPX-9521">
    <property type="entry name" value="LINC complex, SUN1-KASH6 complex"/>
</dbReference>
<dbReference type="ComplexPortal" id="CPX-9541">
    <property type="entry name" value="LINC complex, SUN2-KASH6 complex"/>
</dbReference>
<dbReference type="FunCoup" id="Q12912">
    <property type="interactions" value="158"/>
</dbReference>
<dbReference type="IntAct" id="Q12912">
    <property type="interactions" value="10"/>
</dbReference>
<dbReference type="STRING" id="9606.ENSP00000346442"/>
<dbReference type="TCDB" id="8.A.140.1.1">
    <property type="family name" value="the lymphoid-restricted membrane protein (lrmp) family"/>
</dbReference>
<dbReference type="GlyGen" id="Q12912">
    <property type="glycosylation" value="2 sites, 1 O-linked glycan (1 site)"/>
</dbReference>
<dbReference type="iPTMnet" id="Q12912"/>
<dbReference type="MetOSite" id="Q12912"/>
<dbReference type="PhosphoSitePlus" id="Q12912"/>
<dbReference type="BioMuta" id="LRMP"/>
<dbReference type="DMDM" id="317373427"/>
<dbReference type="jPOST" id="Q12912"/>
<dbReference type="MassIVE" id="Q12912"/>
<dbReference type="PaxDb" id="9606-ENSP00000346442"/>
<dbReference type="PeptideAtlas" id="Q12912"/>
<dbReference type="ProteomicsDB" id="59022">
    <molecule id="Q12912-1"/>
</dbReference>
<dbReference type="ProteomicsDB" id="59023">
    <molecule id="Q12912-2"/>
</dbReference>
<dbReference type="Antibodypedia" id="1183">
    <property type="antibodies" value="86 antibodies from 23 providers"/>
</dbReference>
<dbReference type="DNASU" id="4033"/>
<dbReference type="Ensembl" id="ENST00000354454.7">
    <molecule id="Q12912-2"/>
    <property type="protein sequence ID" value="ENSP00000346442.3"/>
    <property type="gene ID" value="ENSG00000118308.16"/>
</dbReference>
<dbReference type="Ensembl" id="ENST00000547044.5">
    <molecule id="Q12912-2"/>
    <property type="protein sequence ID" value="ENSP00000450246.1"/>
    <property type="gene ID" value="ENSG00000118308.16"/>
</dbReference>
<dbReference type="Ensembl" id="ENST00000548766.5">
    <molecule id="Q12912-2"/>
    <property type="protein sequence ID" value="ENSP00000446496.1"/>
    <property type="gene ID" value="ENSG00000118308.16"/>
</dbReference>
<dbReference type="Ensembl" id="ENST00000556887.6">
    <molecule id="Q12912-2"/>
    <property type="protein sequence ID" value="ENSP00000451048.2"/>
    <property type="gene ID" value="ENSG00000118308.16"/>
</dbReference>
<dbReference type="Ensembl" id="ENST00000557489.6">
    <molecule id="Q12912-2"/>
    <property type="protein sequence ID" value="ENSP00000452116.2"/>
    <property type="gene ID" value="ENSG00000118308.16"/>
</dbReference>
<dbReference type="GeneID" id="4033"/>
<dbReference type="KEGG" id="hsa:4033"/>
<dbReference type="MANE-Select" id="ENST00000556887.6">
    <molecule id="Q12912-2"/>
    <property type="protein sequence ID" value="ENSP00000451048.2"/>
    <property type="RefSeq nucleotide sequence ID" value="NM_001366544.2"/>
    <property type="RefSeq protein sequence ID" value="NP_001353473.1"/>
</dbReference>
<dbReference type="UCSC" id="uc001rgh.4">
    <molecule id="Q12912-1"/>
    <property type="organism name" value="human"/>
</dbReference>
<dbReference type="AGR" id="HGNC:6690"/>
<dbReference type="CTD" id="4033"/>
<dbReference type="DisGeNET" id="4033"/>
<dbReference type="GeneCards" id="IRAG2"/>
<dbReference type="HGNC" id="HGNC:6690">
    <property type="gene designation" value="IRAG2"/>
</dbReference>
<dbReference type="HPA" id="ENSG00000118308">
    <property type="expression patterns" value="Group enriched (bone marrow, lymphoid tissue)"/>
</dbReference>
<dbReference type="MalaCards" id="IRAG2"/>
<dbReference type="MIM" id="602003">
    <property type="type" value="gene"/>
</dbReference>
<dbReference type="neXtProt" id="NX_Q12912"/>
<dbReference type="OpenTargets" id="ENSG00000118308"/>
<dbReference type="PharmGKB" id="PA30450"/>
<dbReference type="VEuPathDB" id="HostDB:ENSG00000118308"/>
<dbReference type="eggNOG" id="ENOG502QTH4">
    <property type="taxonomic scope" value="Eukaryota"/>
</dbReference>
<dbReference type="GeneTree" id="ENSGT00530000063722"/>
<dbReference type="InParanoid" id="Q12912"/>
<dbReference type="OMA" id="EWMAYCG"/>
<dbReference type="OrthoDB" id="10062605at2759"/>
<dbReference type="PAN-GO" id="Q12912">
    <property type="GO annotations" value="1 GO annotation based on evolutionary models"/>
</dbReference>
<dbReference type="PhylomeDB" id="Q12912"/>
<dbReference type="TreeFam" id="TF331789"/>
<dbReference type="PathwayCommons" id="Q12912"/>
<dbReference type="Reactome" id="R-HSA-6798695">
    <property type="pathway name" value="Neutrophil degranulation"/>
</dbReference>
<dbReference type="SignaLink" id="Q12912"/>
<dbReference type="BioGRID-ORCS" id="4033">
    <property type="hits" value="14 hits in 1149 CRISPR screens"/>
</dbReference>
<dbReference type="ChiTaRS" id="LRMP">
    <property type="organism name" value="human"/>
</dbReference>
<dbReference type="GenomeRNAi" id="4033"/>
<dbReference type="Pharos" id="Q12912">
    <property type="development level" value="Tbio"/>
</dbReference>
<dbReference type="PRO" id="PR:Q12912"/>
<dbReference type="Proteomes" id="UP000005640">
    <property type="component" value="Chromosome 12"/>
</dbReference>
<dbReference type="RNAct" id="Q12912">
    <property type="molecule type" value="protein"/>
</dbReference>
<dbReference type="Bgee" id="ENSG00000118308">
    <property type="expression patterns" value="Expressed in secondary oocyte and 169 other cell types or tissues"/>
</dbReference>
<dbReference type="ExpressionAtlas" id="Q12912">
    <property type="expression patterns" value="baseline and differential"/>
</dbReference>
<dbReference type="GO" id="GO:0035577">
    <property type="term" value="C:azurophil granule membrane"/>
    <property type="evidence" value="ECO:0000304"/>
    <property type="project" value="Reactome"/>
</dbReference>
<dbReference type="GO" id="GO:0005813">
    <property type="term" value="C:centrosome"/>
    <property type="evidence" value="ECO:0007669"/>
    <property type="project" value="UniProtKB-SubCell"/>
</dbReference>
<dbReference type="GO" id="GO:0005694">
    <property type="term" value="C:chromosome"/>
    <property type="evidence" value="ECO:0007669"/>
    <property type="project" value="UniProtKB-SubCell"/>
</dbReference>
<dbReference type="GO" id="GO:0005789">
    <property type="term" value="C:endoplasmic reticulum membrane"/>
    <property type="evidence" value="ECO:0000250"/>
    <property type="project" value="UniProtKB"/>
</dbReference>
<dbReference type="GO" id="GO:0016020">
    <property type="term" value="C:membrane"/>
    <property type="evidence" value="ECO:0007005"/>
    <property type="project" value="UniProtKB"/>
</dbReference>
<dbReference type="GO" id="GO:0005635">
    <property type="term" value="C:nuclear envelope"/>
    <property type="evidence" value="ECO:0000250"/>
    <property type="project" value="UniProtKB"/>
</dbReference>
<dbReference type="GO" id="GO:0005886">
    <property type="term" value="C:plasma membrane"/>
    <property type="evidence" value="ECO:0000304"/>
    <property type="project" value="Reactome"/>
</dbReference>
<dbReference type="GO" id="GO:0000922">
    <property type="term" value="C:spindle pole"/>
    <property type="evidence" value="ECO:0007669"/>
    <property type="project" value="UniProtKB-SubCell"/>
</dbReference>
<dbReference type="GO" id="GO:0008017">
    <property type="term" value="F:microtubule binding"/>
    <property type="evidence" value="ECO:0000250"/>
    <property type="project" value="UniProtKB"/>
</dbReference>
<dbReference type="GO" id="GO:0002376">
    <property type="term" value="P:immune system process"/>
    <property type="evidence" value="ECO:0007669"/>
    <property type="project" value="UniProtKB-KW"/>
</dbReference>
<dbReference type="GO" id="GO:0006997">
    <property type="term" value="P:nucleus organization"/>
    <property type="evidence" value="ECO:0000250"/>
    <property type="project" value="UniProtKB"/>
</dbReference>
<dbReference type="GO" id="GO:0007338">
    <property type="term" value="P:single fertilization"/>
    <property type="evidence" value="ECO:0007669"/>
    <property type="project" value="UniProtKB-KW"/>
</dbReference>
<dbReference type="GO" id="GO:0006906">
    <property type="term" value="P:vesicle fusion"/>
    <property type="evidence" value="ECO:0000304"/>
    <property type="project" value="ProtInc"/>
</dbReference>
<dbReference type="GO" id="GO:0006903">
    <property type="term" value="P:vesicle targeting"/>
    <property type="evidence" value="ECO:0000304"/>
    <property type="project" value="ProtInc"/>
</dbReference>
<dbReference type="InterPro" id="IPR008677">
    <property type="entry name" value="MRVI1"/>
</dbReference>
<dbReference type="PANTHER" id="PTHR15352:SF3">
    <property type="entry name" value="INOSITOL 1,4,5-TRIPHOSPHATE RECEPTOR ASSOCIATED 2"/>
    <property type="match status" value="1"/>
</dbReference>
<dbReference type="PANTHER" id="PTHR15352">
    <property type="entry name" value="LYMPHOID-RESTRICTED MEMBRANE PROTEIN, JAW1"/>
    <property type="match status" value="1"/>
</dbReference>
<dbReference type="Pfam" id="PF05781">
    <property type="entry name" value="MRVI1"/>
    <property type="match status" value="1"/>
</dbReference>
<comment type="function">
    <text evidence="3">Plays a role in the delivery of peptides to major histocompatibility complex (MHC) class I molecules; this occurs in a transporter associated with antigen processing (TAP)-independent manner. May play a role in taste signal transduction via ITPR3. May play a role during fertilization in pronucleus congression and fusion. Plays a role in maintaining nuclear shape, maybe as a component of the LINC complex and through interaction with microtubules. Plays a role in the regulation of cellular excitability by regulating the hyperpolarization-activated cyclic nucleotide-gated HCN4 channel activity (By similarity).</text>
</comment>
<comment type="subunit">
    <text evidence="3">Interacts (via coiled-coil domain) with ITPR3. Interacts with SUN1 and SUN2. Interacts with microtubules. Interacts with HCN4; regulates HCN4 channel activity (By similarity).</text>
</comment>
<comment type="interaction">
    <interactant intactId="EBI-2839307">
        <id>Q12912</id>
    </interactant>
    <interactant intactId="EBI-2796904">
        <id>O94901</id>
        <label>SUN1</label>
    </interactant>
    <organismsDiffer>false</organismsDiffer>
    <experiments>6</experiments>
</comment>
<comment type="subcellular location">
    <molecule>Processed inositol 1,4,5-triphosphate receptor associated 2</molecule>
    <subcellularLocation>
        <location evidence="3">Cytoplasm</location>
    </subcellularLocation>
</comment>
<comment type="subcellular location">
    <subcellularLocation>
        <location evidence="3">Endoplasmic reticulum membrane</location>
        <topology evidence="4">Single-pass type IV membrane protein</topology>
    </subcellularLocation>
    <subcellularLocation>
        <location evidence="3">Nucleus envelope</location>
    </subcellularLocation>
    <subcellularLocation>
        <location evidence="2">Cytoplasm</location>
        <location evidence="2">Cytoskeleton</location>
        <location evidence="2">Microtubule organizing center</location>
        <location evidence="2">Centrosome</location>
    </subcellularLocation>
    <subcellularLocation>
        <location evidence="2">Cytoplasm</location>
        <location evidence="2">Cytoskeleton</location>
        <location evidence="2">Spindle pole</location>
    </subcellularLocation>
    <subcellularLocation>
        <location evidence="2">Chromosome</location>
    </subcellularLocation>
    <text evidence="3">Colocalized with ITPR3 on the endoplasmic reticulum membrane.</text>
</comment>
<comment type="alternative products">
    <event type="alternative splicing"/>
    <isoform>
        <id>Q12912-1</id>
        <name>1</name>
        <sequence type="displayed"/>
    </isoform>
    <isoform>
        <id>Q12912-2</id>
        <name>2</name>
        <sequence type="described" ref="VSP_036471"/>
    </isoform>
</comment>
<comment type="tissue specificity">
    <text evidence="8 9">Expressed at high levels in pre B-cells, mature B-cells and pre T-cells. Expressed at low levels in mature T-cells and plasma B-cells. Expressed in germinal center B-cells, splenic marginal zone cells and B-cell lymphomas. Expressed in neuronal cells in the cerebral cortex, epithelial cells in tonsil, adrenal glands, zymogen-producing cells in the stomach and epithelial cells in seminal vesicles.</text>
</comment>
<comment type="PTM">
    <text evidence="1">The removal of the C-terminal lumenal domain occurs by proteolytic processing.</text>
</comment>
<comment type="similarity">
    <text evidence="11">Belongs to the IRAG2 family.</text>
</comment>
<comment type="caution">
    <text evidence="11">It is uncertain whether Met-1 or Met-57 is the initiator methionine. However, according to PubMed:8021504, the initiator methionine is coded by a non-canonical CTG leucine codon; This leucine codon is in an excellent Kozak consensus located 39 bp upstream of the corresponding first mouse ATG.</text>
</comment>
<comment type="sequence caution" evidence="11">
    <conflict type="erroneous translation">
        <sequence resource="EMBL-CDS" id="AAH29391"/>
    </conflict>
    <text>Wrong choice of frame.</text>
</comment>
<comment type="sequence caution" evidence="11">
    <conflict type="erroneous initiation">
        <sequence resource="EMBL-CDS" id="AAI26418"/>
    </conflict>
    <text>Truncated N-terminus.</text>
</comment>
<name>IRAG2_HUMAN</name>
<sequence>MESTPFSGVANQIHTLCERPTYGEVKDGALDVKRQHKCPGPTSGPSPGTNLSGCIRMNDDPSMEENGVERVCPESLLQSREYSSLPLPRHTSSTDGTITSSDPGLEILNMASCDLDRNSLCKKEEDTRSASPTIEAQGTSPAHDNIAFQDSTSKDKTILNLEAKEEPETIEEHKKEHASGDSVVSPLPVTTVKSVNLRQSENTSANEKEVEAEFLRLSLGFKCDWFTLEKRVKLEERSRDLAEENLKKEITNCLKLLESLTPLCEDDNQAQEIIKKLEKSIKFLSQCAARVASRAEMLGAINQESRVSKAVEVMIQHVENLKRMYAKEHAELEELKQVLLQNERSFNPLEDDDDCQIKKRSASLNSKPSSLRRVTIASLPRNIGNAGMVAGMENNDRFSRRSSSWRILGSKQSEHRPSLPRFISTYSWADAEEEKCELKTKDDSEPSGEETVERTRKPSLSEKKNNPSKWDVSSVYDTIASWATNLKSSIRKANKALWLSIAFIVLFAALMSFLTGQLFQKSVDAAPTQQEDSWTSLEHILWPFTRLRHNGPPPV</sequence>
<feature type="chain" id="PRO_0000084483" description="Inositol 1,4,5-triphosphate receptor associated 2">
    <location>
        <begin position="1"/>
        <end position="555"/>
    </location>
</feature>
<feature type="chain" id="PRO_0000296244" description="Processed inositol 1,4,5-triphosphate receptor associated 2">
    <location>
        <begin position="1"/>
        <end status="unknown"/>
    </location>
</feature>
<feature type="topological domain" description="Cytoplasmic" evidence="4">
    <location>
        <begin position="1"/>
        <end position="495"/>
    </location>
</feature>
<feature type="transmembrane region" description="Helical; Anchor for type IV membrane protein" evidence="4">
    <location>
        <begin position="496"/>
        <end position="516"/>
    </location>
</feature>
<feature type="topological domain" description="Lumenal" evidence="4">
    <location>
        <begin position="517"/>
        <end position="555"/>
    </location>
</feature>
<feature type="region of interest" description="Disordered" evidence="5">
    <location>
        <begin position="84"/>
        <end position="103"/>
    </location>
</feature>
<feature type="region of interest" description="Disordered" evidence="5">
    <location>
        <begin position="128"/>
        <end position="147"/>
    </location>
</feature>
<feature type="region of interest" description="Disordered" evidence="5">
    <location>
        <begin position="437"/>
        <end position="469"/>
    </location>
</feature>
<feature type="coiled-coil region" evidence="4">
    <location>
        <begin position="227"/>
        <end position="341"/>
    </location>
</feature>
<feature type="compositionally biased region" description="Low complexity" evidence="5">
    <location>
        <begin position="91"/>
        <end position="102"/>
    </location>
</feature>
<feature type="compositionally biased region" description="Polar residues" evidence="5">
    <location>
        <begin position="129"/>
        <end position="142"/>
    </location>
</feature>
<feature type="compositionally biased region" description="Basic and acidic residues" evidence="5">
    <location>
        <begin position="451"/>
        <end position="465"/>
    </location>
</feature>
<feature type="modified residue" description="Phosphothreonine" evidence="14">
    <location>
        <position position="91"/>
    </location>
</feature>
<feature type="modified residue" description="Phosphoserine" evidence="13">
    <location>
        <position position="363"/>
    </location>
</feature>
<feature type="modified residue" description="Phosphoserine" evidence="13">
    <location>
        <position position="370"/>
    </location>
</feature>
<feature type="modified residue" description="Phosphoserine" evidence="3">
    <location>
        <position position="424"/>
    </location>
</feature>
<feature type="splice variant" id="VSP_036471" description="In isoform 2." evidence="10">
    <location>
        <begin position="1"/>
        <end position="56"/>
    </location>
</feature>
<feature type="sequence variant" id="VAR_054545" description="In dbSNP:rs6487451.">
    <original>T</original>
    <variation>A</variation>
    <location>
        <position position="94"/>
    </location>
</feature>
<feature type="sequence variant" id="VAR_054546" description="In dbSNP:rs7969931." evidence="6 7 9">
    <original>L</original>
    <variation>V</variation>
    <location>
        <position position="197"/>
    </location>
</feature>
<feature type="sequence variant" id="VAR_054547" description="In dbSNP:rs1063159." evidence="9">
    <original>L</original>
    <variation>W</variation>
    <location>
        <position position="241"/>
    </location>
</feature>
<feature type="sequence variant" id="VAR_054548" description="In dbSNP:rs1908946." evidence="7 9">
    <original>C</original>
    <variation>S</variation>
    <location>
        <position position="253"/>
    </location>
</feature>
<feature type="sequence conflict" description="In Ref. 1; AAA21604." evidence="11" ref="1">
    <original>E</original>
    <variation>G</variation>
    <location>
        <position position="81"/>
    </location>
</feature>
<feature type="sequence conflict" description="In Ref. 2; BAG64339." evidence="11" ref="2">
    <original>C</original>
    <variation>R</variation>
    <location>
        <position position="113"/>
    </location>
</feature>
<feature type="helix" evidence="15">
    <location>
        <begin position="531"/>
        <end position="541"/>
    </location>
</feature>
<feature type="helix" evidence="15">
    <location>
        <begin position="542"/>
        <end position="544"/>
    </location>
</feature>
<feature type="strand" evidence="15">
    <location>
        <begin position="545"/>
        <end position="551"/>
    </location>
</feature>
<evidence type="ECO:0000250" key="1"/>
<evidence type="ECO:0000250" key="2">
    <source>
        <dbReference type="UniProtKB" id="Q5RHB5"/>
    </source>
</evidence>
<evidence type="ECO:0000250" key="3">
    <source>
        <dbReference type="UniProtKB" id="Q60664"/>
    </source>
</evidence>
<evidence type="ECO:0000255" key="4"/>
<evidence type="ECO:0000256" key="5">
    <source>
        <dbReference type="SAM" id="MobiDB-lite"/>
    </source>
</evidence>
<evidence type="ECO:0000269" key="6">
    <source>
    </source>
</evidence>
<evidence type="ECO:0000269" key="7">
    <source>
    </source>
</evidence>
<evidence type="ECO:0000269" key="8">
    <source>
    </source>
</evidence>
<evidence type="ECO:0000269" key="9">
    <source>
    </source>
</evidence>
<evidence type="ECO:0000303" key="10">
    <source>
    </source>
</evidence>
<evidence type="ECO:0000305" key="11"/>
<evidence type="ECO:0000312" key="12">
    <source>
        <dbReference type="HGNC" id="HGNC:6690"/>
    </source>
</evidence>
<evidence type="ECO:0007744" key="13">
    <source>
    </source>
</evidence>
<evidence type="ECO:0007744" key="14">
    <source>
    </source>
</evidence>
<evidence type="ECO:0007829" key="15">
    <source>
        <dbReference type="PDB" id="8B46"/>
    </source>
</evidence>
<proteinExistence type="evidence at protein level"/>